<evidence type="ECO:0000250" key="1"/>
<evidence type="ECO:0000255" key="2"/>
<evidence type="ECO:0000305" key="3"/>
<reference key="1">
    <citation type="journal article" date="2013" name="Nature">
        <title>The zebrafish reference genome sequence and its relationship to the human genome.</title>
        <authorList>
            <person name="Howe K."/>
            <person name="Clark M.D."/>
            <person name="Torroja C.F."/>
            <person name="Torrance J."/>
            <person name="Berthelot C."/>
            <person name="Muffato M."/>
            <person name="Collins J.E."/>
            <person name="Humphray S."/>
            <person name="McLaren K."/>
            <person name="Matthews L."/>
            <person name="McLaren S."/>
            <person name="Sealy I."/>
            <person name="Caccamo M."/>
            <person name="Churcher C."/>
            <person name="Scott C."/>
            <person name="Barrett J.C."/>
            <person name="Koch R."/>
            <person name="Rauch G.J."/>
            <person name="White S."/>
            <person name="Chow W."/>
            <person name="Kilian B."/>
            <person name="Quintais L.T."/>
            <person name="Guerra-Assuncao J.A."/>
            <person name="Zhou Y."/>
            <person name="Gu Y."/>
            <person name="Yen J."/>
            <person name="Vogel J.H."/>
            <person name="Eyre T."/>
            <person name="Redmond S."/>
            <person name="Banerjee R."/>
            <person name="Chi J."/>
            <person name="Fu B."/>
            <person name="Langley E."/>
            <person name="Maguire S.F."/>
            <person name="Laird G.K."/>
            <person name="Lloyd D."/>
            <person name="Kenyon E."/>
            <person name="Donaldson S."/>
            <person name="Sehra H."/>
            <person name="Almeida-King J."/>
            <person name="Loveland J."/>
            <person name="Trevanion S."/>
            <person name="Jones M."/>
            <person name="Quail M."/>
            <person name="Willey D."/>
            <person name="Hunt A."/>
            <person name="Burton J."/>
            <person name="Sims S."/>
            <person name="McLay K."/>
            <person name="Plumb B."/>
            <person name="Davis J."/>
            <person name="Clee C."/>
            <person name="Oliver K."/>
            <person name="Clark R."/>
            <person name="Riddle C."/>
            <person name="Elliot D."/>
            <person name="Threadgold G."/>
            <person name="Harden G."/>
            <person name="Ware D."/>
            <person name="Begum S."/>
            <person name="Mortimore B."/>
            <person name="Kerry G."/>
            <person name="Heath P."/>
            <person name="Phillimore B."/>
            <person name="Tracey A."/>
            <person name="Corby N."/>
            <person name="Dunn M."/>
            <person name="Johnson C."/>
            <person name="Wood J."/>
            <person name="Clark S."/>
            <person name="Pelan S."/>
            <person name="Griffiths G."/>
            <person name="Smith M."/>
            <person name="Glithero R."/>
            <person name="Howden P."/>
            <person name="Barker N."/>
            <person name="Lloyd C."/>
            <person name="Stevens C."/>
            <person name="Harley J."/>
            <person name="Holt K."/>
            <person name="Panagiotidis G."/>
            <person name="Lovell J."/>
            <person name="Beasley H."/>
            <person name="Henderson C."/>
            <person name="Gordon D."/>
            <person name="Auger K."/>
            <person name="Wright D."/>
            <person name="Collins J."/>
            <person name="Raisen C."/>
            <person name="Dyer L."/>
            <person name="Leung K."/>
            <person name="Robertson L."/>
            <person name="Ambridge K."/>
            <person name="Leongamornlert D."/>
            <person name="McGuire S."/>
            <person name="Gilderthorp R."/>
            <person name="Griffiths C."/>
            <person name="Manthravadi D."/>
            <person name="Nichol S."/>
            <person name="Barker G."/>
            <person name="Whitehead S."/>
            <person name="Kay M."/>
            <person name="Brown J."/>
            <person name="Murnane C."/>
            <person name="Gray E."/>
            <person name="Humphries M."/>
            <person name="Sycamore N."/>
            <person name="Barker D."/>
            <person name="Saunders D."/>
            <person name="Wallis J."/>
            <person name="Babbage A."/>
            <person name="Hammond S."/>
            <person name="Mashreghi-Mohammadi M."/>
            <person name="Barr L."/>
            <person name="Martin S."/>
            <person name="Wray P."/>
            <person name="Ellington A."/>
            <person name="Matthews N."/>
            <person name="Ellwood M."/>
            <person name="Woodmansey R."/>
            <person name="Clark G."/>
            <person name="Cooper J."/>
            <person name="Tromans A."/>
            <person name="Grafham D."/>
            <person name="Skuce C."/>
            <person name="Pandian R."/>
            <person name="Andrews R."/>
            <person name="Harrison E."/>
            <person name="Kimberley A."/>
            <person name="Garnett J."/>
            <person name="Fosker N."/>
            <person name="Hall R."/>
            <person name="Garner P."/>
            <person name="Kelly D."/>
            <person name="Bird C."/>
            <person name="Palmer S."/>
            <person name="Gehring I."/>
            <person name="Berger A."/>
            <person name="Dooley C.M."/>
            <person name="Ersan-Urun Z."/>
            <person name="Eser C."/>
            <person name="Geiger H."/>
            <person name="Geisler M."/>
            <person name="Karotki L."/>
            <person name="Kirn A."/>
            <person name="Konantz J."/>
            <person name="Konantz M."/>
            <person name="Oberlander M."/>
            <person name="Rudolph-Geiger S."/>
            <person name="Teucke M."/>
            <person name="Lanz C."/>
            <person name="Raddatz G."/>
            <person name="Osoegawa K."/>
            <person name="Zhu B."/>
            <person name="Rapp A."/>
            <person name="Widaa S."/>
            <person name="Langford C."/>
            <person name="Yang F."/>
            <person name="Schuster S.C."/>
            <person name="Carter N.P."/>
            <person name="Harrow J."/>
            <person name="Ning Z."/>
            <person name="Herrero J."/>
            <person name="Searle S.M."/>
            <person name="Enright A."/>
            <person name="Geisler R."/>
            <person name="Plasterk R.H."/>
            <person name="Lee C."/>
            <person name="Westerfield M."/>
            <person name="de Jong P.J."/>
            <person name="Zon L.I."/>
            <person name="Postlethwait J.H."/>
            <person name="Nusslein-Volhard C."/>
            <person name="Hubbard T.J."/>
            <person name="Roest Crollius H."/>
            <person name="Rogers J."/>
            <person name="Stemple D.L."/>
        </authorList>
    </citation>
    <scope>NUCLEOTIDE SEQUENCE [LARGE SCALE GENOMIC DNA]</scope>
    <source>
        <strain>Tuebingen</strain>
    </source>
</reference>
<comment type="function">
    <text evidence="1">Plays a role in the assembly or stability of the cytochrome c oxidase complex (COX).</text>
</comment>
<comment type="subcellular location">
    <subcellularLocation>
        <location evidence="1">Mitochondrion membrane</location>
        <topology evidence="1">Single-pass membrane protein</topology>
    </subcellularLocation>
</comment>
<comment type="sequence caution" evidence="3">
    <conflict type="erroneous initiation">
        <sequence resource="EMBL-CDS" id="CAP09429"/>
    </conflict>
    <text>Extended N-terminus.</text>
</comment>
<feature type="chain" id="PRO_0000359746" description="Cytochrome c oxidase assembly protein COX14 homolog">
    <location>
        <begin position="1"/>
        <end position="60"/>
    </location>
</feature>
<feature type="transmembrane region" description="Helical" evidence="2">
    <location>
        <begin position="10"/>
        <end position="32"/>
    </location>
</feature>
<name>COX14_DANRE</name>
<keyword id="KW-0472">Membrane</keyword>
<keyword id="KW-0496">Mitochondrion</keyword>
<keyword id="KW-1185">Reference proteome</keyword>
<keyword id="KW-0812">Transmembrane</keyword>
<keyword id="KW-1133">Transmembrane helix</keyword>
<protein>
    <recommendedName>
        <fullName>Cytochrome c oxidase assembly protein COX14 homolog</fullName>
    </recommendedName>
</protein>
<organism>
    <name type="scientific">Danio rerio</name>
    <name type="common">Zebrafish</name>
    <name type="synonym">Brachydanio rerio</name>
    <dbReference type="NCBI Taxonomy" id="7955"/>
    <lineage>
        <taxon>Eukaryota</taxon>
        <taxon>Metazoa</taxon>
        <taxon>Chordata</taxon>
        <taxon>Craniata</taxon>
        <taxon>Vertebrata</taxon>
        <taxon>Euteleostomi</taxon>
        <taxon>Actinopterygii</taxon>
        <taxon>Neopterygii</taxon>
        <taxon>Teleostei</taxon>
        <taxon>Ostariophysi</taxon>
        <taxon>Cypriniformes</taxon>
        <taxon>Danionidae</taxon>
        <taxon>Danioninae</taxon>
        <taxon>Danio</taxon>
    </lineage>
</organism>
<proteinExistence type="inferred from homology"/>
<gene>
    <name type="ORF">si:dkey-222f2.8</name>
</gene>
<accession>A8E7D3</accession>
<sequence length="60" mass="6790">MVSGKRIADVGYRLFSGSMMLLTVYGGYLCVVRAQRYMQRKKQLELAAQSENTASEIIKE</sequence>
<dbReference type="EMBL" id="BX005329">
    <property type="protein sequence ID" value="CAP09429.1"/>
    <property type="status" value="ALT_INIT"/>
    <property type="molecule type" value="Genomic_DNA"/>
</dbReference>
<dbReference type="RefSeq" id="NP_001289695.1">
    <property type="nucleotide sequence ID" value="NM_001302766.1"/>
</dbReference>
<dbReference type="SMR" id="A8E7D3"/>
<dbReference type="FunCoup" id="A8E7D3">
    <property type="interactions" value="1374"/>
</dbReference>
<dbReference type="STRING" id="7955.ENSDARP00000117013"/>
<dbReference type="PaxDb" id="7955-ENSDARP00000117013"/>
<dbReference type="PeptideAtlas" id="A8E7D3"/>
<dbReference type="GeneID" id="568423"/>
<dbReference type="KEGG" id="dre:568423"/>
<dbReference type="AGR" id="ZFIN:ZDB-GENE-060503-626"/>
<dbReference type="CTD" id="84987"/>
<dbReference type="ZFIN" id="ZDB-GENE-060503-626">
    <property type="gene designation" value="cox14"/>
</dbReference>
<dbReference type="eggNOG" id="ENOG502SCZ6">
    <property type="taxonomic scope" value="Eukaryota"/>
</dbReference>
<dbReference type="InParanoid" id="A8E7D3"/>
<dbReference type="OrthoDB" id="9928108at2759"/>
<dbReference type="PhylomeDB" id="A8E7D3"/>
<dbReference type="PRO" id="PR:A8E7D3"/>
<dbReference type="Proteomes" id="UP000000437">
    <property type="component" value="Chromosome 22"/>
</dbReference>
<dbReference type="GO" id="GO:0031966">
    <property type="term" value="C:mitochondrial membrane"/>
    <property type="evidence" value="ECO:0007669"/>
    <property type="project" value="UniProtKB-SubCell"/>
</dbReference>
<dbReference type="InterPro" id="IPR029208">
    <property type="entry name" value="COX14"/>
</dbReference>
<dbReference type="PANTHER" id="PTHR36684">
    <property type="entry name" value="CYTOCHROME C OXIDASE ASSEMBLY PROTEIN COX14"/>
    <property type="match status" value="1"/>
</dbReference>
<dbReference type="PANTHER" id="PTHR36684:SF1">
    <property type="entry name" value="CYTOCHROME C OXIDASE ASSEMBLY PROTEIN COX14"/>
    <property type="match status" value="1"/>
</dbReference>
<dbReference type="Pfam" id="PF14880">
    <property type="entry name" value="COX14"/>
    <property type="match status" value="1"/>
</dbReference>